<name>NHP2_ARATH</name>
<protein>
    <recommendedName>
        <fullName>H/ACA ribonucleoprotein complex subunit 2-like protein</fullName>
    </recommendedName>
    <alternativeName>
        <fullName>Nhp2-like protein</fullName>
    </alternativeName>
</protein>
<evidence type="ECO:0000250" key="1"/>
<evidence type="ECO:0000305" key="2"/>
<sequence length="156" mass="16948">MGSDTEAEKSIQKEKKKYAITLAPIAKPLAGKKLQKRTFKLIQKAAGKKCLKRGVKEVVKSIRRGQKGLCVIAGNISPIDVITHLPILCEEAGVPYVYVPSKEDLAQAGATKRPTCCVLVMLKPAKGDLTAEELAKLKTDYEQVSDDIKELATSVI</sequence>
<feature type="chain" id="PRO_0000136774" description="H/ACA ribonucleoprotein complex subunit 2-like protein">
    <location>
        <begin position="1"/>
        <end position="156"/>
    </location>
</feature>
<dbReference type="EMBL" id="AL357612">
    <property type="protein sequence ID" value="CAB93719.1"/>
    <property type="molecule type" value="Genomic_DNA"/>
</dbReference>
<dbReference type="EMBL" id="CP002688">
    <property type="protein sequence ID" value="AED91262.1"/>
    <property type="molecule type" value="Genomic_DNA"/>
</dbReference>
<dbReference type="EMBL" id="CP002688">
    <property type="protein sequence ID" value="AED91263.1"/>
    <property type="molecule type" value="Genomic_DNA"/>
</dbReference>
<dbReference type="EMBL" id="AY050477">
    <property type="protein sequence ID" value="AAK91490.1"/>
    <property type="molecule type" value="mRNA"/>
</dbReference>
<dbReference type="EMBL" id="AF378885">
    <property type="protein sequence ID" value="AAK55688.1"/>
    <property type="molecule type" value="mRNA"/>
</dbReference>
<dbReference type="PIR" id="T50503">
    <property type="entry name" value="T50503"/>
</dbReference>
<dbReference type="RefSeq" id="NP_001190260.1">
    <property type="nucleotide sequence ID" value="NM_001203331.1"/>
</dbReference>
<dbReference type="RefSeq" id="NP_196435.1">
    <property type="nucleotide sequence ID" value="NM_120901.4"/>
</dbReference>
<dbReference type="SMR" id="Q9LEY9"/>
<dbReference type="BioGRID" id="15992">
    <property type="interactions" value="5"/>
</dbReference>
<dbReference type="FunCoup" id="Q9LEY9">
    <property type="interactions" value="3586"/>
</dbReference>
<dbReference type="IntAct" id="Q9LEY9">
    <property type="interactions" value="1"/>
</dbReference>
<dbReference type="STRING" id="3702.Q9LEY9"/>
<dbReference type="iPTMnet" id="Q9LEY9"/>
<dbReference type="PaxDb" id="3702-AT5G08180.2"/>
<dbReference type="ProteomicsDB" id="249386"/>
<dbReference type="EnsemblPlants" id="AT5G08180.1">
    <property type="protein sequence ID" value="AT5G08180.1"/>
    <property type="gene ID" value="AT5G08180"/>
</dbReference>
<dbReference type="EnsemblPlants" id="AT5G08180.2">
    <property type="protein sequence ID" value="AT5G08180.2"/>
    <property type="gene ID" value="AT5G08180"/>
</dbReference>
<dbReference type="GeneID" id="830714"/>
<dbReference type="Gramene" id="AT5G08180.1">
    <property type="protein sequence ID" value="AT5G08180.1"/>
    <property type="gene ID" value="AT5G08180"/>
</dbReference>
<dbReference type="Gramene" id="AT5G08180.2">
    <property type="protein sequence ID" value="AT5G08180.2"/>
    <property type="gene ID" value="AT5G08180"/>
</dbReference>
<dbReference type="KEGG" id="ath:AT5G08180"/>
<dbReference type="Araport" id="AT5G08180"/>
<dbReference type="TAIR" id="AT5G08180"/>
<dbReference type="eggNOG" id="KOG3167">
    <property type="taxonomic scope" value="Eukaryota"/>
</dbReference>
<dbReference type="HOGENOM" id="CLU_084513_1_1_1"/>
<dbReference type="InParanoid" id="Q9LEY9"/>
<dbReference type="OMA" id="WCASESK"/>
<dbReference type="OrthoDB" id="5364946at2759"/>
<dbReference type="PhylomeDB" id="Q9LEY9"/>
<dbReference type="CD-CODE" id="4299E36E">
    <property type="entry name" value="Nucleolus"/>
</dbReference>
<dbReference type="PRO" id="PR:Q9LEY9"/>
<dbReference type="Proteomes" id="UP000006548">
    <property type="component" value="Chromosome 5"/>
</dbReference>
<dbReference type="ExpressionAtlas" id="Q9LEY9">
    <property type="expression patterns" value="baseline and differential"/>
</dbReference>
<dbReference type="GO" id="GO:0005730">
    <property type="term" value="C:nucleolus"/>
    <property type="evidence" value="ECO:0007005"/>
    <property type="project" value="TAIR"/>
</dbReference>
<dbReference type="GO" id="GO:0005732">
    <property type="term" value="C:sno(s)RNA-containing ribonucleoprotein complex"/>
    <property type="evidence" value="ECO:0000250"/>
    <property type="project" value="UniProtKB"/>
</dbReference>
<dbReference type="GO" id="GO:0003729">
    <property type="term" value="F:mRNA binding"/>
    <property type="evidence" value="ECO:0000314"/>
    <property type="project" value="TAIR"/>
</dbReference>
<dbReference type="GO" id="GO:0031118">
    <property type="term" value="P:rRNA pseudouridine synthesis"/>
    <property type="evidence" value="ECO:0000250"/>
    <property type="project" value="UniProtKB"/>
</dbReference>
<dbReference type="FunFam" id="3.30.1330.30:FF:000015">
    <property type="entry name" value="H/ACA ribonucleoprotein complex subunit NHP2"/>
    <property type="match status" value="1"/>
</dbReference>
<dbReference type="Gene3D" id="3.30.1330.30">
    <property type="match status" value="1"/>
</dbReference>
<dbReference type="InterPro" id="IPR050257">
    <property type="entry name" value="eL8/uL1-like"/>
</dbReference>
<dbReference type="InterPro" id="IPR002415">
    <property type="entry name" value="H/ACA_rnp_Nhp2-like"/>
</dbReference>
<dbReference type="InterPro" id="IPR029064">
    <property type="entry name" value="Ribosomal_eL30-like_sf"/>
</dbReference>
<dbReference type="InterPro" id="IPR004038">
    <property type="entry name" value="Ribosomal_eL8/eL30/eS12/Gad45"/>
</dbReference>
<dbReference type="InterPro" id="IPR018492">
    <property type="entry name" value="Ribosomal_eL8/Nhp2"/>
</dbReference>
<dbReference type="PANTHER" id="PTHR23105">
    <property type="entry name" value="RIBOSOMAL PROTEIN L7AE FAMILY MEMBER"/>
    <property type="match status" value="1"/>
</dbReference>
<dbReference type="Pfam" id="PF01248">
    <property type="entry name" value="Ribosomal_L7Ae"/>
    <property type="match status" value="1"/>
</dbReference>
<dbReference type="PRINTS" id="PR00881">
    <property type="entry name" value="L7ARS6FAMILY"/>
</dbReference>
<dbReference type="PRINTS" id="PR00883">
    <property type="entry name" value="NUCLEARHMG"/>
</dbReference>
<dbReference type="SUPFAM" id="SSF55315">
    <property type="entry name" value="L30e-like"/>
    <property type="match status" value="1"/>
</dbReference>
<organism>
    <name type="scientific">Arabidopsis thaliana</name>
    <name type="common">Mouse-ear cress</name>
    <dbReference type="NCBI Taxonomy" id="3702"/>
    <lineage>
        <taxon>Eukaryota</taxon>
        <taxon>Viridiplantae</taxon>
        <taxon>Streptophyta</taxon>
        <taxon>Embryophyta</taxon>
        <taxon>Tracheophyta</taxon>
        <taxon>Spermatophyta</taxon>
        <taxon>Magnoliopsida</taxon>
        <taxon>eudicotyledons</taxon>
        <taxon>Gunneridae</taxon>
        <taxon>Pentapetalae</taxon>
        <taxon>rosids</taxon>
        <taxon>malvids</taxon>
        <taxon>Brassicales</taxon>
        <taxon>Brassicaceae</taxon>
        <taxon>Camelineae</taxon>
        <taxon>Arabidopsis</taxon>
    </lineage>
</organism>
<proteinExistence type="evidence at protein level"/>
<comment type="function">
    <text evidence="1">Required for ribosome biogenesis. Part of a complex which catalyzes pseudouridylation of rRNA. This involves the isomerization of uridine such that the ribose is subsequently attached to C5, instead of the normal N1. Pseudouridine ('psi') residues may serve to stabilize the conformation of rRNAs (By similarity).</text>
</comment>
<comment type="subunit">
    <text evidence="1">Component of the small nucleolar ribonucleoprotein particle containing H/ACA-type snoRNAs (H/ACA snoRNPs).</text>
</comment>
<comment type="subcellular location">
    <subcellularLocation>
        <location evidence="1">Nucleus</location>
        <location evidence="1">Nucleolus</location>
    </subcellularLocation>
</comment>
<comment type="similarity">
    <text evidence="2">Belongs to the eukaryotic ribosomal protein eL8 family.</text>
</comment>
<gene>
    <name type="ordered locus">At5g08180</name>
    <name type="ORF">T22D6.120</name>
</gene>
<accession>Q9LEY9</accession>
<reference key="1">
    <citation type="journal article" date="2000" name="Nature">
        <title>Sequence and analysis of chromosome 5 of the plant Arabidopsis thaliana.</title>
        <authorList>
            <person name="Tabata S."/>
            <person name="Kaneko T."/>
            <person name="Nakamura Y."/>
            <person name="Kotani H."/>
            <person name="Kato T."/>
            <person name="Asamizu E."/>
            <person name="Miyajima N."/>
            <person name="Sasamoto S."/>
            <person name="Kimura T."/>
            <person name="Hosouchi T."/>
            <person name="Kawashima K."/>
            <person name="Kohara M."/>
            <person name="Matsumoto M."/>
            <person name="Matsuno A."/>
            <person name="Muraki A."/>
            <person name="Nakayama S."/>
            <person name="Nakazaki N."/>
            <person name="Naruo K."/>
            <person name="Okumura S."/>
            <person name="Shinpo S."/>
            <person name="Takeuchi C."/>
            <person name="Wada T."/>
            <person name="Watanabe A."/>
            <person name="Yamada M."/>
            <person name="Yasuda M."/>
            <person name="Sato S."/>
            <person name="de la Bastide M."/>
            <person name="Huang E."/>
            <person name="Spiegel L."/>
            <person name="Gnoj L."/>
            <person name="O'Shaughnessy A."/>
            <person name="Preston R."/>
            <person name="Habermann K."/>
            <person name="Murray J."/>
            <person name="Johnson D."/>
            <person name="Rohlfing T."/>
            <person name="Nelson J."/>
            <person name="Stoneking T."/>
            <person name="Pepin K."/>
            <person name="Spieth J."/>
            <person name="Sekhon M."/>
            <person name="Armstrong J."/>
            <person name="Becker M."/>
            <person name="Belter E."/>
            <person name="Cordum H."/>
            <person name="Cordes M."/>
            <person name="Courtney L."/>
            <person name="Courtney W."/>
            <person name="Dante M."/>
            <person name="Du H."/>
            <person name="Edwards J."/>
            <person name="Fryman J."/>
            <person name="Haakensen B."/>
            <person name="Lamar E."/>
            <person name="Latreille P."/>
            <person name="Leonard S."/>
            <person name="Meyer R."/>
            <person name="Mulvaney E."/>
            <person name="Ozersky P."/>
            <person name="Riley A."/>
            <person name="Strowmatt C."/>
            <person name="Wagner-McPherson C."/>
            <person name="Wollam A."/>
            <person name="Yoakum M."/>
            <person name="Bell M."/>
            <person name="Dedhia N."/>
            <person name="Parnell L."/>
            <person name="Shah R."/>
            <person name="Rodriguez M."/>
            <person name="Hoon See L."/>
            <person name="Vil D."/>
            <person name="Baker J."/>
            <person name="Kirchoff K."/>
            <person name="Toth K."/>
            <person name="King L."/>
            <person name="Bahret A."/>
            <person name="Miller B."/>
            <person name="Marra M.A."/>
            <person name="Martienssen R."/>
            <person name="McCombie W.R."/>
            <person name="Wilson R.K."/>
            <person name="Murphy G."/>
            <person name="Bancroft I."/>
            <person name="Volckaert G."/>
            <person name="Wambutt R."/>
            <person name="Duesterhoeft A."/>
            <person name="Stiekema W."/>
            <person name="Pohl T."/>
            <person name="Entian K.-D."/>
            <person name="Terryn N."/>
            <person name="Hartley N."/>
            <person name="Bent E."/>
            <person name="Johnson S."/>
            <person name="Langham S.-A."/>
            <person name="McCullagh B."/>
            <person name="Robben J."/>
            <person name="Grymonprez B."/>
            <person name="Zimmermann W."/>
            <person name="Ramsperger U."/>
            <person name="Wedler H."/>
            <person name="Balke K."/>
            <person name="Wedler E."/>
            <person name="Peters S."/>
            <person name="van Staveren M."/>
            <person name="Dirkse W."/>
            <person name="Mooijman P."/>
            <person name="Klein Lankhorst R."/>
            <person name="Weitzenegger T."/>
            <person name="Bothe G."/>
            <person name="Rose M."/>
            <person name="Hauf J."/>
            <person name="Berneiser S."/>
            <person name="Hempel S."/>
            <person name="Feldpausch M."/>
            <person name="Lamberth S."/>
            <person name="Villarroel R."/>
            <person name="Gielen J."/>
            <person name="Ardiles W."/>
            <person name="Bents O."/>
            <person name="Lemcke K."/>
            <person name="Kolesov G."/>
            <person name="Mayer K.F.X."/>
            <person name="Rudd S."/>
            <person name="Schoof H."/>
            <person name="Schueller C."/>
            <person name="Zaccaria P."/>
            <person name="Mewes H.-W."/>
            <person name="Bevan M."/>
            <person name="Fransz P.F."/>
        </authorList>
    </citation>
    <scope>NUCLEOTIDE SEQUENCE [LARGE SCALE GENOMIC DNA]</scope>
    <source>
        <strain>cv. Columbia</strain>
    </source>
</reference>
<reference key="2">
    <citation type="journal article" date="2017" name="Plant J.">
        <title>Araport11: a complete reannotation of the Arabidopsis thaliana reference genome.</title>
        <authorList>
            <person name="Cheng C.Y."/>
            <person name="Krishnakumar V."/>
            <person name="Chan A.P."/>
            <person name="Thibaud-Nissen F."/>
            <person name="Schobel S."/>
            <person name="Town C.D."/>
        </authorList>
    </citation>
    <scope>GENOME REANNOTATION</scope>
    <source>
        <strain>cv. Columbia</strain>
    </source>
</reference>
<reference key="3">
    <citation type="journal article" date="2003" name="Science">
        <title>Empirical analysis of transcriptional activity in the Arabidopsis genome.</title>
        <authorList>
            <person name="Yamada K."/>
            <person name="Lim J."/>
            <person name="Dale J.M."/>
            <person name="Chen H."/>
            <person name="Shinn P."/>
            <person name="Palm C.J."/>
            <person name="Southwick A.M."/>
            <person name="Wu H.C."/>
            <person name="Kim C.J."/>
            <person name="Nguyen M."/>
            <person name="Pham P.K."/>
            <person name="Cheuk R.F."/>
            <person name="Karlin-Newmann G."/>
            <person name="Liu S.X."/>
            <person name="Lam B."/>
            <person name="Sakano H."/>
            <person name="Wu T."/>
            <person name="Yu G."/>
            <person name="Miranda M."/>
            <person name="Quach H.L."/>
            <person name="Tripp M."/>
            <person name="Chang C.H."/>
            <person name="Lee J.M."/>
            <person name="Toriumi M.J."/>
            <person name="Chan M.M."/>
            <person name="Tang C.C."/>
            <person name="Onodera C.S."/>
            <person name="Deng J.M."/>
            <person name="Akiyama K."/>
            <person name="Ansari Y."/>
            <person name="Arakawa T."/>
            <person name="Banh J."/>
            <person name="Banno F."/>
            <person name="Bowser L."/>
            <person name="Brooks S.Y."/>
            <person name="Carninci P."/>
            <person name="Chao Q."/>
            <person name="Choy N."/>
            <person name="Enju A."/>
            <person name="Goldsmith A.D."/>
            <person name="Gurjal M."/>
            <person name="Hansen N.F."/>
            <person name="Hayashizaki Y."/>
            <person name="Johnson-Hopson C."/>
            <person name="Hsuan V.W."/>
            <person name="Iida K."/>
            <person name="Karnes M."/>
            <person name="Khan S."/>
            <person name="Koesema E."/>
            <person name="Ishida J."/>
            <person name="Jiang P.X."/>
            <person name="Jones T."/>
            <person name="Kawai J."/>
            <person name="Kamiya A."/>
            <person name="Meyers C."/>
            <person name="Nakajima M."/>
            <person name="Narusaka M."/>
            <person name="Seki M."/>
            <person name="Sakurai T."/>
            <person name="Satou M."/>
            <person name="Tamse R."/>
            <person name="Vaysberg M."/>
            <person name="Wallender E.K."/>
            <person name="Wong C."/>
            <person name="Yamamura Y."/>
            <person name="Yuan S."/>
            <person name="Shinozaki K."/>
            <person name="Davis R.W."/>
            <person name="Theologis A."/>
            <person name="Ecker J.R."/>
        </authorList>
    </citation>
    <scope>NUCLEOTIDE SEQUENCE [LARGE SCALE MRNA]</scope>
    <source>
        <strain>cv. Columbia</strain>
    </source>
</reference>
<reference key="4">
    <citation type="journal article" date="2009" name="Plant Physiol.">
        <title>Large-scale Arabidopsis phosphoproteome profiling reveals novel chloroplast kinase substrates and phosphorylation networks.</title>
        <authorList>
            <person name="Reiland S."/>
            <person name="Messerli G."/>
            <person name="Baerenfaller K."/>
            <person name="Gerrits B."/>
            <person name="Endler A."/>
            <person name="Grossmann J."/>
            <person name="Gruissem W."/>
            <person name="Baginsky S."/>
        </authorList>
    </citation>
    <scope>IDENTIFICATION BY MASS SPECTROMETRY [LARGE SCALE ANALYSIS]</scope>
</reference>
<keyword id="KW-0539">Nucleus</keyword>
<keyword id="KW-1185">Reference proteome</keyword>
<keyword id="KW-0687">Ribonucleoprotein</keyword>
<keyword id="KW-0690">Ribosome biogenesis</keyword>
<keyword id="KW-0694">RNA-binding</keyword>
<keyword id="KW-0698">rRNA processing</keyword>